<comment type="function">
    <text evidence="1">Protease subunit of a proteasome-like degradation complex believed to be a general protein degrading machinery.</text>
</comment>
<comment type="catalytic activity">
    <reaction evidence="1">
        <text>ATP-dependent cleavage of peptide bonds with broad specificity.</text>
        <dbReference type="EC" id="3.4.25.2"/>
    </reaction>
</comment>
<comment type="activity regulation">
    <text evidence="1">Allosterically activated by HslU binding.</text>
</comment>
<comment type="subunit">
    <text evidence="1">A double ring-shaped homohexamer of HslV is capped on each side by a ring-shaped HslU homohexamer. The assembly of the HslU/HslV complex is dependent on binding of ATP.</text>
</comment>
<comment type="subcellular location">
    <subcellularLocation>
        <location evidence="1">Cytoplasm</location>
    </subcellularLocation>
</comment>
<comment type="similarity">
    <text evidence="1">Belongs to the peptidase T1B family. HslV subfamily.</text>
</comment>
<organism>
    <name type="scientific">Nitrosococcus oceani (strain ATCC 19707 / BCRC 17464 / JCM 30415 / NCIMB 11848 / C-107)</name>
    <dbReference type="NCBI Taxonomy" id="323261"/>
    <lineage>
        <taxon>Bacteria</taxon>
        <taxon>Pseudomonadati</taxon>
        <taxon>Pseudomonadota</taxon>
        <taxon>Gammaproteobacteria</taxon>
        <taxon>Chromatiales</taxon>
        <taxon>Chromatiaceae</taxon>
        <taxon>Nitrosococcus</taxon>
    </lineage>
</organism>
<gene>
    <name evidence="1" type="primary">hslV</name>
    <name type="ordered locus">Noc_2340</name>
</gene>
<evidence type="ECO:0000255" key="1">
    <source>
        <dbReference type="HAMAP-Rule" id="MF_00248"/>
    </source>
</evidence>
<accession>Q3J8P8</accession>
<sequence>MEHFRGTTILSVRRQEQVVIGGDGQVSMNNIVMKGNARKVRRLFHNQVIAGFAGGTADAFTLFERFEAKLEKHQGNLTRAAVELAKDWRSDRSLRRLEALLAVADHKASYVISGNGDVIEPEYGLIAIGSGGPYAQAAARALLENTDFSARVIVEKALSIAADICIYTNTHLTVEELSG</sequence>
<feature type="chain" id="PRO_1000012639" description="ATP-dependent protease subunit HslV">
    <location>
        <begin position="1"/>
        <end position="179"/>
    </location>
</feature>
<feature type="active site" evidence="1">
    <location>
        <position position="7"/>
    </location>
</feature>
<feature type="binding site" evidence="1">
    <location>
        <position position="162"/>
    </location>
    <ligand>
        <name>Na(+)</name>
        <dbReference type="ChEBI" id="CHEBI:29101"/>
    </ligand>
</feature>
<feature type="binding site" evidence="1">
    <location>
        <position position="165"/>
    </location>
    <ligand>
        <name>Na(+)</name>
        <dbReference type="ChEBI" id="CHEBI:29101"/>
    </ligand>
</feature>
<feature type="binding site" evidence="1">
    <location>
        <position position="168"/>
    </location>
    <ligand>
        <name>Na(+)</name>
        <dbReference type="ChEBI" id="CHEBI:29101"/>
    </ligand>
</feature>
<proteinExistence type="inferred from homology"/>
<dbReference type="EC" id="3.4.25.2" evidence="1"/>
<dbReference type="EMBL" id="CP000127">
    <property type="protein sequence ID" value="ABA58798.1"/>
    <property type="molecule type" value="Genomic_DNA"/>
</dbReference>
<dbReference type="RefSeq" id="WP_002808887.1">
    <property type="nucleotide sequence ID" value="NC_007484.1"/>
</dbReference>
<dbReference type="SMR" id="Q3J8P8"/>
<dbReference type="FunCoup" id="Q3J8P8">
    <property type="interactions" value="394"/>
</dbReference>
<dbReference type="STRING" id="323261.Noc_2340"/>
<dbReference type="MEROPS" id="T01.006"/>
<dbReference type="KEGG" id="noc:Noc_2340"/>
<dbReference type="eggNOG" id="COG5405">
    <property type="taxonomic scope" value="Bacteria"/>
</dbReference>
<dbReference type="HOGENOM" id="CLU_093872_1_0_6"/>
<dbReference type="InParanoid" id="Q3J8P8"/>
<dbReference type="Proteomes" id="UP000006838">
    <property type="component" value="Chromosome"/>
</dbReference>
<dbReference type="GO" id="GO:0009376">
    <property type="term" value="C:HslUV protease complex"/>
    <property type="evidence" value="ECO:0007669"/>
    <property type="project" value="UniProtKB-UniRule"/>
</dbReference>
<dbReference type="GO" id="GO:0005839">
    <property type="term" value="C:proteasome core complex"/>
    <property type="evidence" value="ECO:0007669"/>
    <property type="project" value="InterPro"/>
</dbReference>
<dbReference type="GO" id="GO:0046872">
    <property type="term" value="F:metal ion binding"/>
    <property type="evidence" value="ECO:0007669"/>
    <property type="project" value="UniProtKB-KW"/>
</dbReference>
<dbReference type="GO" id="GO:0004298">
    <property type="term" value="F:threonine-type endopeptidase activity"/>
    <property type="evidence" value="ECO:0007669"/>
    <property type="project" value="UniProtKB-KW"/>
</dbReference>
<dbReference type="GO" id="GO:0051603">
    <property type="term" value="P:proteolysis involved in protein catabolic process"/>
    <property type="evidence" value="ECO:0007669"/>
    <property type="project" value="InterPro"/>
</dbReference>
<dbReference type="CDD" id="cd01913">
    <property type="entry name" value="protease_HslV"/>
    <property type="match status" value="1"/>
</dbReference>
<dbReference type="FunFam" id="3.60.20.10:FF:000002">
    <property type="entry name" value="ATP-dependent protease subunit HslV"/>
    <property type="match status" value="1"/>
</dbReference>
<dbReference type="Gene3D" id="3.60.20.10">
    <property type="entry name" value="Glutamine Phosphoribosylpyrophosphate, subunit 1, domain 1"/>
    <property type="match status" value="1"/>
</dbReference>
<dbReference type="HAMAP" id="MF_00248">
    <property type="entry name" value="HslV"/>
    <property type="match status" value="1"/>
</dbReference>
<dbReference type="InterPro" id="IPR022281">
    <property type="entry name" value="ATP-dep_Prtase_HsIV_su"/>
</dbReference>
<dbReference type="InterPro" id="IPR029055">
    <property type="entry name" value="Ntn_hydrolases_N"/>
</dbReference>
<dbReference type="InterPro" id="IPR001353">
    <property type="entry name" value="Proteasome_sua/b"/>
</dbReference>
<dbReference type="InterPro" id="IPR023333">
    <property type="entry name" value="Proteasome_suB-type"/>
</dbReference>
<dbReference type="NCBIfam" id="TIGR03692">
    <property type="entry name" value="ATP_dep_HslV"/>
    <property type="match status" value="1"/>
</dbReference>
<dbReference type="NCBIfam" id="NF003964">
    <property type="entry name" value="PRK05456.1"/>
    <property type="match status" value="1"/>
</dbReference>
<dbReference type="PANTHER" id="PTHR32194:SF0">
    <property type="entry name" value="ATP-DEPENDENT PROTEASE SUBUNIT HSLV"/>
    <property type="match status" value="1"/>
</dbReference>
<dbReference type="PANTHER" id="PTHR32194">
    <property type="entry name" value="METALLOPROTEASE TLDD"/>
    <property type="match status" value="1"/>
</dbReference>
<dbReference type="Pfam" id="PF00227">
    <property type="entry name" value="Proteasome"/>
    <property type="match status" value="1"/>
</dbReference>
<dbReference type="PIRSF" id="PIRSF039093">
    <property type="entry name" value="HslV"/>
    <property type="match status" value="1"/>
</dbReference>
<dbReference type="SUPFAM" id="SSF56235">
    <property type="entry name" value="N-terminal nucleophile aminohydrolases (Ntn hydrolases)"/>
    <property type="match status" value="1"/>
</dbReference>
<dbReference type="PROSITE" id="PS51476">
    <property type="entry name" value="PROTEASOME_BETA_2"/>
    <property type="match status" value="1"/>
</dbReference>
<reference key="1">
    <citation type="journal article" date="2006" name="Appl. Environ. Microbiol.">
        <title>Complete genome sequence of the marine, chemolithoautotrophic, ammonia-oxidizing bacterium Nitrosococcus oceani ATCC 19707.</title>
        <authorList>
            <person name="Klotz M.G."/>
            <person name="Arp D.J."/>
            <person name="Chain P.S.G."/>
            <person name="El-Sheikh A.F."/>
            <person name="Hauser L.J."/>
            <person name="Hommes N.G."/>
            <person name="Larimer F.W."/>
            <person name="Malfatti S.A."/>
            <person name="Norton J.M."/>
            <person name="Poret-Peterson A.T."/>
            <person name="Vergez L.M."/>
            <person name="Ward B.B."/>
        </authorList>
    </citation>
    <scope>NUCLEOTIDE SEQUENCE [LARGE SCALE GENOMIC DNA]</scope>
    <source>
        <strain>ATCC 19707 / BCRC 17464 / JCM 30415 / NCIMB 11848 / C-107</strain>
    </source>
</reference>
<protein>
    <recommendedName>
        <fullName evidence="1">ATP-dependent protease subunit HslV</fullName>
        <ecNumber evidence="1">3.4.25.2</ecNumber>
    </recommendedName>
</protein>
<name>HSLV_NITOC</name>
<keyword id="KW-0021">Allosteric enzyme</keyword>
<keyword id="KW-0963">Cytoplasm</keyword>
<keyword id="KW-0378">Hydrolase</keyword>
<keyword id="KW-0479">Metal-binding</keyword>
<keyword id="KW-0645">Protease</keyword>
<keyword id="KW-1185">Reference proteome</keyword>
<keyword id="KW-0915">Sodium</keyword>
<keyword id="KW-0888">Threonine protease</keyword>